<gene>
    <name type="primary">CCDC85B</name>
    <name type="synonym">DIPA</name>
</gene>
<proteinExistence type="evidence at protein level"/>
<dbReference type="EMBL" id="U63825">
    <property type="protein sequence ID" value="AAB05928.1"/>
    <property type="molecule type" value="mRNA"/>
</dbReference>
<dbReference type="EMBL" id="AK312109">
    <property type="protein sequence ID" value="BAG35045.1"/>
    <property type="molecule type" value="mRNA"/>
</dbReference>
<dbReference type="EMBL" id="CH471076">
    <property type="protein sequence ID" value="EAW74468.1"/>
    <property type="molecule type" value="Genomic_DNA"/>
</dbReference>
<dbReference type="EMBL" id="BC008796">
    <property type="protein sequence ID" value="AAH08796.1"/>
    <property type="molecule type" value="mRNA"/>
</dbReference>
<dbReference type="CCDS" id="CCDS8120.1"/>
<dbReference type="RefSeq" id="NP_006839.2">
    <property type="nucleotide sequence ID" value="NM_006848.2"/>
</dbReference>
<dbReference type="SMR" id="Q15834"/>
<dbReference type="BioGRID" id="116198">
    <property type="interactions" value="168"/>
</dbReference>
<dbReference type="CORUM" id="Q15834"/>
<dbReference type="FunCoup" id="Q15834">
    <property type="interactions" value="345"/>
</dbReference>
<dbReference type="IntAct" id="Q15834">
    <property type="interactions" value="157"/>
</dbReference>
<dbReference type="MINT" id="Q15834"/>
<dbReference type="STRING" id="9606.ENSP00000311695"/>
<dbReference type="iPTMnet" id="Q15834"/>
<dbReference type="PhosphoSitePlus" id="Q15834"/>
<dbReference type="BioMuta" id="CCDC85B"/>
<dbReference type="DMDM" id="92090801"/>
<dbReference type="jPOST" id="Q15834"/>
<dbReference type="MassIVE" id="Q15834"/>
<dbReference type="PaxDb" id="9606-ENSP00000311695"/>
<dbReference type="PeptideAtlas" id="Q15834"/>
<dbReference type="ProteomicsDB" id="60784"/>
<dbReference type="Pumba" id="Q15834"/>
<dbReference type="Antibodypedia" id="55944">
    <property type="antibodies" value="54 antibodies from 20 providers"/>
</dbReference>
<dbReference type="DNASU" id="11007"/>
<dbReference type="Ensembl" id="ENST00000312579.4">
    <property type="protein sequence ID" value="ENSP00000311695.2"/>
    <property type="gene ID" value="ENSG00000175602.4"/>
</dbReference>
<dbReference type="GeneID" id="11007"/>
<dbReference type="KEGG" id="hsa:11007"/>
<dbReference type="MANE-Select" id="ENST00000312579.4">
    <property type="protein sequence ID" value="ENSP00000311695.2"/>
    <property type="RefSeq nucleotide sequence ID" value="NM_006848.3"/>
    <property type="RefSeq protein sequence ID" value="NP_006839.2"/>
</dbReference>
<dbReference type="UCSC" id="uc001ogf.4">
    <property type="organism name" value="human"/>
</dbReference>
<dbReference type="AGR" id="HGNC:24926"/>
<dbReference type="CTD" id="11007"/>
<dbReference type="DisGeNET" id="11007"/>
<dbReference type="GeneCards" id="CCDC85B"/>
<dbReference type="HGNC" id="HGNC:24926">
    <property type="gene designation" value="CCDC85B"/>
</dbReference>
<dbReference type="HPA" id="ENSG00000175602">
    <property type="expression patterns" value="Tissue enhanced (brain)"/>
</dbReference>
<dbReference type="MIM" id="605360">
    <property type="type" value="gene"/>
</dbReference>
<dbReference type="neXtProt" id="NX_Q15834"/>
<dbReference type="OpenTargets" id="ENSG00000175602"/>
<dbReference type="PharmGKB" id="PA144596453"/>
<dbReference type="VEuPathDB" id="HostDB:ENSG00000175602"/>
<dbReference type="eggNOG" id="KOG3819">
    <property type="taxonomic scope" value="Eukaryota"/>
</dbReference>
<dbReference type="GeneTree" id="ENSGT00940000162317"/>
<dbReference type="HOGENOM" id="CLU_117450_0_0_1"/>
<dbReference type="InParanoid" id="Q15834"/>
<dbReference type="OMA" id="EEWGPRS"/>
<dbReference type="OrthoDB" id="10056395at2759"/>
<dbReference type="PAN-GO" id="Q15834">
    <property type="GO annotations" value="2 GO annotations based on evolutionary models"/>
</dbReference>
<dbReference type="PhylomeDB" id="Q15834"/>
<dbReference type="TreeFam" id="TF320243"/>
<dbReference type="PathwayCommons" id="Q15834"/>
<dbReference type="SignaLink" id="Q15834"/>
<dbReference type="BioGRID-ORCS" id="11007">
    <property type="hits" value="31 hits in 1158 CRISPR screens"/>
</dbReference>
<dbReference type="CD-CODE" id="8C2F96ED">
    <property type="entry name" value="Centrosome"/>
</dbReference>
<dbReference type="GeneWiki" id="CCDC85B"/>
<dbReference type="GenomeRNAi" id="11007"/>
<dbReference type="Pharos" id="Q15834">
    <property type="development level" value="Tdark"/>
</dbReference>
<dbReference type="PRO" id="PR:Q15834"/>
<dbReference type="Proteomes" id="UP000005640">
    <property type="component" value="Chromosome 11"/>
</dbReference>
<dbReference type="RNAct" id="Q15834">
    <property type="molecule type" value="protein"/>
</dbReference>
<dbReference type="Bgee" id="ENSG00000175602">
    <property type="expression patterns" value="Expressed in amygdala and 200 other cell types or tissues"/>
</dbReference>
<dbReference type="GO" id="GO:0005912">
    <property type="term" value="C:adherens junction"/>
    <property type="evidence" value="ECO:0000314"/>
    <property type="project" value="UniProtKB"/>
</dbReference>
<dbReference type="GO" id="GO:0005813">
    <property type="term" value="C:centrosome"/>
    <property type="evidence" value="ECO:0000314"/>
    <property type="project" value="UniProtKB"/>
</dbReference>
<dbReference type="GO" id="GO:0005737">
    <property type="term" value="C:cytoplasm"/>
    <property type="evidence" value="ECO:0007669"/>
    <property type="project" value="UniProtKB-KW"/>
</dbReference>
<dbReference type="GO" id="GO:0005634">
    <property type="term" value="C:nucleus"/>
    <property type="evidence" value="ECO:0000314"/>
    <property type="project" value="UniProtKB"/>
</dbReference>
<dbReference type="GO" id="GO:0070097">
    <property type="term" value="F:delta-catenin binding"/>
    <property type="evidence" value="ECO:0000353"/>
    <property type="project" value="UniProtKB"/>
</dbReference>
<dbReference type="GO" id="GO:0030154">
    <property type="term" value="P:cell differentiation"/>
    <property type="evidence" value="ECO:0007669"/>
    <property type="project" value="UniProtKB-KW"/>
</dbReference>
<dbReference type="GO" id="GO:0030308">
    <property type="term" value="P:negative regulation of cell growth"/>
    <property type="evidence" value="ECO:0000314"/>
    <property type="project" value="UniProtKB"/>
</dbReference>
<dbReference type="GO" id="GO:0045892">
    <property type="term" value="P:negative regulation of DNA-templated transcription"/>
    <property type="evidence" value="ECO:0000314"/>
    <property type="project" value="UniProtKB"/>
</dbReference>
<dbReference type="GO" id="GO:0045599">
    <property type="term" value="P:negative regulation of fat cell differentiation"/>
    <property type="evidence" value="ECO:0000250"/>
    <property type="project" value="UniProtKB"/>
</dbReference>
<dbReference type="InterPro" id="IPR019359">
    <property type="entry name" value="CCDC85"/>
</dbReference>
<dbReference type="PANTHER" id="PTHR13546:SF12">
    <property type="entry name" value="COILED-COIL DOMAIN-CONTAINING PROTEIN 85B"/>
    <property type="match status" value="1"/>
</dbReference>
<dbReference type="PANTHER" id="PTHR13546">
    <property type="entry name" value="RE60986P"/>
    <property type="match status" value="1"/>
</dbReference>
<dbReference type="Pfam" id="PF10226">
    <property type="entry name" value="CCDC85"/>
    <property type="match status" value="1"/>
</dbReference>
<protein>
    <recommendedName>
        <fullName>Coiled-coil domain-containing protein 85B</fullName>
    </recommendedName>
    <alternativeName>
        <fullName>Hepatitis delta antigen-interacting protein A</fullName>
        <shortName>Delta-interacting protein A</shortName>
    </alternativeName>
</protein>
<evidence type="ECO:0000250" key="1">
    <source>
        <dbReference type="UniProtKB" id="A2CEM9"/>
    </source>
</evidence>
<evidence type="ECO:0000250" key="2">
    <source>
        <dbReference type="UniProtKB" id="Q6PDY0"/>
    </source>
</evidence>
<evidence type="ECO:0000255" key="3"/>
<evidence type="ECO:0000256" key="4">
    <source>
        <dbReference type="SAM" id="MobiDB-lite"/>
    </source>
</evidence>
<evidence type="ECO:0000269" key="5">
    <source>
    </source>
</evidence>
<evidence type="ECO:0000269" key="6">
    <source>
    </source>
</evidence>
<evidence type="ECO:0000269" key="7">
    <source>
    </source>
</evidence>
<evidence type="ECO:0000269" key="8">
    <source>
    </source>
</evidence>
<evidence type="ECO:0000269" key="9">
    <source>
    </source>
</evidence>
<evidence type="ECO:0000305" key="10"/>
<evidence type="ECO:0007744" key="11">
    <source>
    </source>
</evidence>
<keyword id="KW-0007">Acetylation</keyword>
<keyword id="KW-0965">Cell junction</keyword>
<keyword id="KW-0175">Coiled coil</keyword>
<keyword id="KW-0963">Cytoplasm</keyword>
<keyword id="KW-0206">Cytoskeleton</keyword>
<keyword id="KW-0221">Differentiation</keyword>
<keyword id="KW-0341">Growth regulation</keyword>
<keyword id="KW-0945">Host-virus interaction</keyword>
<keyword id="KW-0539">Nucleus</keyword>
<keyword id="KW-1267">Proteomics identification</keyword>
<keyword id="KW-1185">Reference proteome</keyword>
<keyword id="KW-0678">Repressor</keyword>
<keyword id="KW-0804">Transcription</keyword>
<keyword id="KW-0805">Transcription regulation</keyword>
<name>CC85B_HUMAN</name>
<feature type="chain" id="PRO_0000079908" description="Coiled-coil domain-containing protein 85B">
    <location>
        <begin position="1"/>
        <end position="202"/>
    </location>
</feature>
<feature type="region of interest" description="Disordered" evidence="4">
    <location>
        <begin position="148"/>
        <end position="202"/>
    </location>
</feature>
<feature type="coiled-coil region" evidence="3">
    <location>
        <begin position="43"/>
        <end position="90"/>
    </location>
</feature>
<feature type="coiled-coil region" evidence="3">
    <location>
        <begin position="118"/>
        <end position="147"/>
    </location>
</feature>
<feature type="compositionally biased region" description="Gly residues" evidence="4">
    <location>
        <begin position="150"/>
        <end position="162"/>
    </location>
</feature>
<feature type="compositionally biased region" description="Low complexity" evidence="4">
    <location>
        <begin position="180"/>
        <end position="190"/>
    </location>
</feature>
<feature type="modified residue" description="N-acetylmethionine" evidence="11">
    <location>
        <position position="1"/>
    </location>
</feature>
<feature type="mutagenesis site" description="Loss of interaction with TCF7L2 and loss of suppression of CTNNB1 activity. Loss of cell growth inhibition." evidence="6">
    <original>L</original>
    <variation>A</variation>
    <location>
        <position position="131"/>
    </location>
</feature>
<feature type="sequence conflict" description="In Ref. 1; AAB05928." evidence="10" ref="1">
    <original>A</original>
    <variation>T</variation>
    <location>
        <position position="34"/>
    </location>
</feature>
<accession>Q15834</accession>
<accession>B2R598</accession>
<accession>Q96HA0</accession>
<sequence length="202" mass="22091">MEAEAGGLEELTDEEMAALGKEELVRRLRREEAARLAALVQRGRLMQEVNRQLQGHLGEIRELKQLNRRLQAENRELRDLCCFLDSERQRGRRAARQWQLFGTQASRAVREDLGGCWQKLAELEGRQEELLRENLALKELCLALGEEWGPRGGPSGAGGSGAGPAPELALPPCGPRDLGDGSSSTGSVGSPDQLPLACSPDD</sequence>
<comment type="function">
    <text evidence="1 2 5 6">Functions as a transcriptional repressor (PubMed:17014843). May inhibit the activity of CTNNB1 in a TP53-dependent manner and thus regulate cell growth (PubMed:17873903). May function in adipocyte differentiation, negatively regulating mitotic clonal expansion (By similarity). Plays a role in cell-cell adhesion and epithelium development through its interaction with proteins of the beta-catenin family (By similarity).</text>
</comment>
<comment type="function">
    <text evidence="9">(Microbial infection) Plays a role in hepatitis delta virus (HDV) genomic replication.</text>
</comment>
<comment type="subunit">
    <text evidence="2 5 6 7 8">Interacts with CEBPB (By similarity). Interacts with EURL (By similarity). May interact with CEBPD (By similarity). Interacts with MCRS1 (PubMed:17014843). Interacts with TCF7L2; competes with CTNNB1 (PubMed:17873903). Interacts with ANKRD26 (PubMed:22666460). Interacts with the beta-catenin family proteins ARVCF, CTNND1, CTNND2 and PKP4 (PubMed:25009281).</text>
</comment>
<comment type="subunit">
    <text evidence="9">(Microbial infection) Interacts with the viral phosphoprotein hepatitis delta antigen (HDAG); this interaction affects hepatitis delta virus (HDV) genomic replication in intact cells.</text>
</comment>
<comment type="interaction">
    <interactant intactId="EBI-739674">
        <id>Q15834</id>
    </interactant>
    <interactant intactId="EBI-518823">
        <id>O15392</id>
        <label>BIRC5</label>
    </interactant>
    <organismsDiffer>false</organismsDiffer>
    <experiments>3</experiments>
</comment>
<comment type="interaction">
    <interactant intactId="EBI-739674">
        <id>Q15834</id>
    </interactant>
    <interactant intactId="EBI-741214">
        <id>Q9UFG5</id>
        <label>C19orf25</label>
    </interactant>
    <organismsDiffer>false</organismsDiffer>
    <experiments>2</experiments>
</comment>
<comment type="interaction">
    <interactant intactId="EBI-739674">
        <id>Q15834</id>
    </interactant>
    <interactant intactId="EBI-10250303">
        <id>Q6IPU0</id>
        <label>CENPP</label>
    </interactant>
    <organismsDiffer>false</organismsDiffer>
    <experiments>3</experiments>
</comment>
<comment type="interaction">
    <interactant intactId="EBI-739674">
        <id>Q15834</id>
    </interactant>
    <interactant intactId="EBI-743375">
        <id>Q9NX63</id>
        <label>CHCHD3</label>
    </interactant>
    <organismsDiffer>false</organismsDiffer>
    <experiments>2</experiments>
</comment>
<comment type="interaction">
    <interactant intactId="EBI-739674">
        <id>Q15834</id>
    </interactant>
    <interactant intactId="EBI-715611">
        <id>Q9C086</id>
        <label>INO80B</label>
    </interactant>
    <organismsDiffer>false</organismsDiffer>
    <experiments>3</experiments>
</comment>
<comment type="interaction">
    <interactant intactId="EBI-739674">
        <id>Q15834</id>
    </interactant>
    <interactant intactId="EBI-740244">
        <id>Q7Z3B3</id>
        <label>KANSL1</label>
    </interactant>
    <organismsDiffer>false</organismsDiffer>
    <experiments>2</experiments>
</comment>
<comment type="interaction">
    <interactant intactId="EBI-739674">
        <id>Q15834</id>
    </interactant>
    <interactant intactId="EBI-297873">
        <id>Q04695</id>
        <label>KRT17</label>
    </interactant>
    <organismsDiffer>false</organismsDiffer>
    <experiments>2</experiments>
</comment>
<comment type="interaction">
    <interactant intactId="EBI-739674">
        <id>Q15834</id>
    </interactant>
    <interactant intactId="EBI-702198">
        <id>P02538</id>
        <label>KRT6A</label>
    </interactant>
    <organismsDiffer>false</organismsDiffer>
    <experiments>2</experiments>
</comment>
<comment type="interaction">
    <interactant intactId="EBI-739674">
        <id>Q15834</id>
    </interactant>
    <interactant intactId="EBI-1046387">
        <id>Q96NG3</id>
        <label>ODAD4</label>
    </interactant>
    <organismsDiffer>false</organismsDiffer>
    <experiments>3</experiments>
</comment>
<comment type="interaction">
    <interactant intactId="EBI-739674">
        <id>Q15834</id>
    </interactant>
    <interactant intactId="EBI-602382">
        <id>Q16512</id>
        <label>PKN1</label>
    </interactant>
    <organismsDiffer>false</organismsDiffer>
    <experiments>2</experiments>
</comment>
<comment type="interaction">
    <interactant intactId="EBI-739674">
        <id>Q15834</id>
    </interactant>
    <interactant intactId="EBI-12058229">
        <id>P57771-2</id>
        <label>RGS8</label>
    </interactant>
    <organismsDiffer>false</organismsDiffer>
    <experiments>3</experiments>
</comment>
<comment type="interaction">
    <interactant intactId="EBI-739674">
        <id>Q15834</id>
    </interactant>
    <interactant intactId="EBI-10273713">
        <id>Q8TBZ8</id>
        <label>ZNF564</label>
    </interactant>
    <organismsDiffer>false</organismsDiffer>
    <experiments>3</experiments>
</comment>
<comment type="interaction">
    <interactant intactId="EBI-739674">
        <id>Q15834</id>
    </interactant>
    <interactant intactId="EBI-6427977">
        <id>Q96SQ5</id>
        <label>ZNF587</label>
    </interactant>
    <organismsDiffer>false</organismsDiffer>
    <experiments>3</experiments>
</comment>
<comment type="subcellular location">
    <subcellularLocation>
        <location evidence="5 6">Nucleus</location>
    </subcellularLocation>
    <subcellularLocation>
        <location evidence="5">Cytoplasm</location>
        <location evidence="5">Cytoskeleton</location>
        <location evidence="5">Microtubule organizing center</location>
        <location evidence="5">Centrosome</location>
    </subcellularLocation>
    <subcellularLocation>
        <location evidence="8">Cell junction</location>
        <location evidence="8">Adherens junction</location>
    </subcellularLocation>
</comment>
<comment type="tissue specificity">
    <text>Widely expressed including liver.</text>
</comment>
<comment type="induction">
    <text evidence="6">Up-regulated by doxorubicin.</text>
</comment>
<comment type="miscellaneous">
    <text>May be the cellular homolog of HDAG. Overexpression inhibited HDV replication, whereas overexpression of HDAG reversed the inhibition, suggesting that HDAG may assist HDV replication by forming a complex with DIPA.</text>
</comment>
<comment type="similarity">
    <text evidence="10">Belongs to the CCDC85 family.</text>
</comment>
<reference key="1">
    <citation type="journal article" date="1996" name="Science">
        <title>A cellular homolog of hepatitis delta antigen: implications for viral replication and evolution.</title>
        <authorList>
            <person name="Brazas R."/>
            <person name="Ganem D."/>
        </authorList>
    </citation>
    <scope>NUCLEOTIDE SEQUENCE [MRNA]</scope>
    <scope>FUNCTION (MICROBIAL INFECTION)</scope>
    <scope>INTERACTION WITH HEPATITIS DELTA ANTIGEN HDAG (MICROBIAL INFECTION)</scope>
    <source>
        <tissue>Promyelocytic leukemia</tissue>
    </source>
</reference>
<reference key="2">
    <citation type="journal article" date="2004" name="Nat. Genet.">
        <title>Complete sequencing and characterization of 21,243 full-length human cDNAs.</title>
        <authorList>
            <person name="Ota T."/>
            <person name="Suzuki Y."/>
            <person name="Nishikawa T."/>
            <person name="Otsuki T."/>
            <person name="Sugiyama T."/>
            <person name="Irie R."/>
            <person name="Wakamatsu A."/>
            <person name="Hayashi K."/>
            <person name="Sato H."/>
            <person name="Nagai K."/>
            <person name="Kimura K."/>
            <person name="Makita H."/>
            <person name="Sekine M."/>
            <person name="Obayashi M."/>
            <person name="Nishi T."/>
            <person name="Shibahara T."/>
            <person name="Tanaka T."/>
            <person name="Ishii S."/>
            <person name="Yamamoto J."/>
            <person name="Saito K."/>
            <person name="Kawai Y."/>
            <person name="Isono Y."/>
            <person name="Nakamura Y."/>
            <person name="Nagahari K."/>
            <person name="Murakami K."/>
            <person name="Yasuda T."/>
            <person name="Iwayanagi T."/>
            <person name="Wagatsuma M."/>
            <person name="Shiratori A."/>
            <person name="Sudo H."/>
            <person name="Hosoiri T."/>
            <person name="Kaku Y."/>
            <person name="Kodaira H."/>
            <person name="Kondo H."/>
            <person name="Sugawara M."/>
            <person name="Takahashi M."/>
            <person name="Kanda K."/>
            <person name="Yokoi T."/>
            <person name="Furuya T."/>
            <person name="Kikkawa E."/>
            <person name="Omura Y."/>
            <person name="Abe K."/>
            <person name="Kamihara K."/>
            <person name="Katsuta N."/>
            <person name="Sato K."/>
            <person name="Tanikawa M."/>
            <person name="Yamazaki M."/>
            <person name="Ninomiya K."/>
            <person name="Ishibashi T."/>
            <person name="Yamashita H."/>
            <person name="Murakawa K."/>
            <person name="Fujimori K."/>
            <person name="Tanai H."/>
            <person name="Kimata M."/>
            <person name="Watanabe M."/>
            <person name="Hiraoka S."/>
            <person name="Chiba Y."/>
            <person name="Ishida S."/>
            <person name="Ono Y."/>
            <person name="Takiguchi S."/>
            <person name="Watanabe S."/>
            <person name="Yosida M."/>
            <person name="Hotuta T."/>
            <person name="Kusano J."/>
            <person name="Kanehori K."/>
            <person name="Takahashi-Fujii A."/>
            <person name="Hara H."/>
            <person name="Tanase T.-O."/>
            <person name="Nomura Y."/>
            <person name="Togiya S."/>
            <person name="Komai F."/>
            <person name="Hara R."/>
            <person name="Takeuchi K."/>
            <person name="Arita M."/>
            <person name="Imose N."/>
            <person name="Musashino K."/>
            <person name="Yuuki H."/>
            <person name="Oshima A."/>
            <person name="Sasaki N."/>
            <person name="Aotsuka S."/>
            <person name="Yoshikawa Y."/>
            <person name="Matsunawa H."/>
            <person name="Ichihara T."/>
            <person name="Shiohata N."/>
            <person name="Sano S."/>
            <person name="Moriya S."/>
            <person name="Momiyama H."/>
            <person name="Satoh N."/>
            <person name="Takami S."/>
            <person name="Terashima Y."/>
            <person name="Suzuki O."/>
            <person name="Nakagawa S."/>
            <person name="Senoh A."/>
            <person name="Mizoguchi H."/>
            <person name="Goto Y."/>
            <person name="Shimizu F."/>
            <person name="Wakebe H."/>
            <person name="Hishigaki H."/>
            <person name="Watanabe T."/>
            <person name="Sugiyama A."/>
            <person name="Takemoto M."/>
            <person name="Kawakami B."/>
            <person name="Yamazaki M."/>
            <person name="Watanabe K."/>
            <person name="Kumagai A."/>
            <person name="Itakura S."/>
            <person name="Fukuzumi Y."/>
            <person name="Fujimori Y."/>
            <person name="Komiyama M."/>
            <person name="Tashiro H."/>
            <person name="Tanigami A."/>
            <person name="Fujiwara T."/>
            <person name="Ono T."/>
            <person name="Yamada K."/>
            <person name="Fujii Y."/>
            <person name="Ozaki K."/>
            <person name="Hirao M."/>
            <person name="Ohmori Y."/>
            <person name="Kawabata A."/>
            <person name="Hikiji T."/>
            <person name="Kobatake N."/>
            <person name="Inagaki H."/>
            <person name="Ikema Y."/>
            <person name="Okamoto S."/>
            <person name="Okitani R."/>
            <person name="Kawakami T."/>
            <person name="Noguchi S."/>
            <person name="Itoh T."/>
            <person name="Shigeta K."/>
            <person name="Senba T."/>
            <person name="Matsumura K."/>
            <person name="Nakajima Y."/>
            <person name="Mizuno T."/>
            <person name="Morinaga M."/>
            <person name="Sasaki M."/>
            <person name="Togashi T."/>
            <person name="Oyama M."/>
            <person name="Hata H."/>
            <person name="Watanabe M."/>
            <person name="Komatsu T."/>
            <person name="Mizushima-Sugano J."/>
            <person name="Satoh T."/>
            <person name="Shirai Y."/>
            <person name="Takahashi Y."/>
            <person name="Nakagawa K."/>
            <person name="Okumura K."/>
            <person name="Nagase T."/>
            <person name="Nomura N."/>
            <person name="Kikuchi H."/>
            <person name="Masuho Y."/>
            <person name="Yamashita R."/>
            <person name="Nakai K."/>
            <person name="Yada T."/>
            <person name="Nakamura Y."/>
            <person name="Ohara O."/>
            <person name="Isogai T."/>
            <person name="Sugano S."/>
        </authorList>
    </citation>
    <scope>NUCLEOTIDE SEQUENCE [LARGE SCALE MRNA]</scope>
    <source>
        <tissue>Skeletal muscle</tissue>
    </source>
</reference>
<reference key="3">
    <citation type="submission" date="2005-07" db="EMBL/GenBank/DDBJ databases">
        <authorList>
            <person name="Mural R.J."/>
            <person name="Istrail S."/>
            <person name="Sutton G.G."/>
            <person name="Florea L."/>
            <person name="Halpern A.L."/>
            <person name="Mobarry C.M."/>
            <person name="Lippert R."/>
            <person name="Walenz B."/>
            <person name="Shatkay H."/>
            <person name="Dew I."/>
            <person name="Miller J.R."/>
            <person name="Flanigan M.J."/>
            <person name="Edwards N.J."/>
            <person name="Bolanos R."/>
            <person name="Fasulo D."/>
            <person name="Halldorsson B.V."/>
            <person name="Hannenhalli S."/>
            <person name="Turner R."/>
            <person name="Yooseph S."/>
            <person name="Lu F."/>
            <person name="Nusskern D.R."/>
            <person name="Shue B.C."/>
            <person name="Zheng X.H."/>
            <person name="Zhong F."/>
            <person name="Delcher A.L."/>
            <person name="Huson D.H."/>
            <person name="Kravitz S.A."/>
            <person name="Mouchard L."/>
            <person name="Reinert K."/>
            <person name="Remington K.A."/>
            <person name="Clark A.G."/>
            <person name="Waterman M.S."/>
            <person name="Eichler E.E."/>
            <person name="Adams M.D."/>
            <person name="Hunkapiller M.W."/>
            <person name="Myers E.W."/>
            <person name="Venter J.C."/>
        </authorList>
    </citation>
    <scope>NUCLEOTIDE SEQUENCE [LARGE SCALE GENOMIC DNA]</scope>
</reference>
<reference key="4">
    <citation type="journal article" date="2004" name="Genome Res.">
        <title>The status, quality, and expansion of the NIH full-length cDNA project: the Mammalian Gene Collection (MGC).</title>
        <authorList>
            <consortium name="The MGC Project Team"/>
        </authorList>
    </citation>
    <scope>NUCLEOTIDE SEQUENCE [LARGE SCALE MRNA]</scope>
    <source>
        <tissue>Skin</tissue>
    </source>
</reference>
<reference key="5">
    <citation type="journal article" date="2006" name="Exp. Mol. Pathol.">
        <title>DIPA, which can localize to the centrosome, associates with p78/MCRS1/MSP58 and acts as a repressor of gene transcription.</title>
        <authorList>
            <person name="Du X."/>
            <person name="Wang Q."/>
            <person name="Hirohashi Y."/>
            <person name="Greene M.I."/>
        </authorList>
    </citation>
    <scope>FUNCTION</scope>
    <scope>INTERACTION WITH MCRS1</scope>
    <scope>SUBCELLULAR LOCATION</scope>
</reference>
<reference key="6">
    <citation type="journal article" date="2008" name="Oncogene">
        <title>Coiled-coil domain containing 85B suppresses the beta-catenin activity in a p53-dependent manner.</title>
        <authorList>
            <person name="Iwai A."/>
            <person name="Hijikata M."/>
            <person name="Hishiki T."/>
            <person name="Isono O."/>
            <person name="Chiba T."/>
            <person name="Shimotohno K."/>
        </authorList>
    </citation>
    <scope>FUNCTION</scope>
    <scope>INTERACTION WITH TCF7L2</scope>
    <scope>INDUCTION BY DOXORUBICIN</scope>
    <scope>MUTAGENESIS OF LEU-131</scope>
    <scope>SUBCELLULAR LOCATION</scope>
</reference>
<reference key="7">
    <citation type="journal article" date="2012" name="PLoS ONE">
        <title>ANKRD26 and its interacting partners TRIO, GPS2, HMMR and DIPA regulate adipogenesis in 3T3-L1 cells.</title>
        <authorList>
            <person name="Liu X.F."/>
            <person name="Bera T.K."/>
            <person name="Kahue C."/>
            <person name="Escobar T."/>
            <person name="Fei Z."/>
            <person name="Raciti G.A."/>
            <person name="Pastan I."/>
        </authorList>
    </citation>
    <scope>INTERACTION WITH ANKRD26</scope>
</reference>
<reference key="8">
    <citation type="journal article" date="2012" name="Proc. Natl. Acad. Sci. U.S.A.">
        <title>N-terminal acetylome analyses and functional insights of the N-terminal acetyltransferase NatB.</title>
        <authorList>
            <person name="Van Damme P."/>
            <person name="Lasa M."/>
            <person name="Polevoda B."/>
            <person name="Gazquez C."/>
            <person name="Elosegui-Artola A."/>
            <person name="Kim D.S."/>
            <person name="De Juan-Pardo E."/>
            <person name="Demeyer K."/>
            <person name="Hole K."/>
            <person name="Larrea E."/>
            <person name="Timmerman E."/>
            <person name="Prieto J."/>
            <person name="Arnesen T."/>
            <person name="Sherman F."/>
            <person name="Gevaert K."/>
            <person name="Aldabe R."/>
        </authorList>
    </citation>
    <scope>ACETYLATION [LARGE SCALE ANALYSIS] AT MET-1</scope>
    <scope>IDENTIFICATION BY MASS SPECTROMETRY [LARGE SCALE ANALYSIS]</scope>
</reference>
<reference key="9">
    <citation type="journal article" date="2014" name="Mol. Biol. Cell">
        <title>DIPA-family coiled-coils bind conserved isoform-specific head domain of p120-catenin family: potential roles in hydrocephalus and heterotopia.</title>
        <authorList>
            <person name="Markham N.O."/>
            <person name="Doll C.A."/>
            <person name="Dohn M.R."/>
            <person name="Miller R.K."/>
            <person name="Yu H."/>
            <person name="Coffey R.J."/>
            <person name="McCrea P.D."/>
            <person name="Gamse J.T."/>
            <person name="Reynolds A.B."/>
        </authorList>
    </citation>
    <scope>FUNCTION</scope>
    <scope>INTERACTION WITH ARVCF; CTNND1; CTNND2 AND PKP4</scope>
    <scope>SUBCELLULAR LOCATION</scope>
</reference>
<organism>
    <name type="scientific">Homo sapiens</name>
    <name type="common">Human</name>
    <dbReference type="NCBI Taxonomy" id="9606"/>
    <lineage>
        <taxon>Eukaryota</taxon>
        <taxon>Metazoa</taxon>
        <taxon>Chordata</taxon>
        <taxon>Craniata</taxon>
        <taxon>Vertebrata</taxon>
        <taxon>Euteleostomi</taxon>
        <taxon>Mammalia</taxon>
        <taxon>Eutheria</taxon>
        <taxon>Euarchontoglires</taxon>
        <taxon>Primates</taxon>
        <taxon>Haplorrhini</taxon>
        <taxon>Catarrhini</taxon>
        <taxon>Hominidae</taxon>
        <taxon>Homo</taxon>
    </lineage>
</organism>